<dbReference type="EC" id="2.7.4.8" evidence="1"/>
<dbReference type="EMBL" id="CP000033">
    <property type="protein sequence ID" value="AAV43152.1"/>
    <property type="molecule type" value="Genomic_DNA"/>
</dbReference>
<dbReference type="RefSeq" id="WP_003547929.1">
    <property type="nucleotide sequence ID" value="NC_006814.3"/>
</dbReference>
<dbReference type="RefSeq" id="YP_194183.1">
    <property type="nucleotide sequence ID" value="NC_006814.3"/>
</dbReference>
<dbReference type="SMR" id="Q5FJH2"/>
<dbReference type="STRING" id="272621.LBA1325"/>
<dbReference type="KEGG" id="lac:LBA1325"/>
<dbReference type="PATRIC" id="fig|272621.13.peg.1253"/>
<dbReference type="eggNOG" id="COG0194">
    <property type="taxonomic scope" value="Bacteria"/>
</dbReference>
<dbReference type="HOGENOM" id="CLU_001715_1_0_9"/>
<dbReference type="OrthoDB" id="9808150at2"/>
<dbReference type="BioCyc" id="LACI272621:G1G49-1302-MONOMER"/>
<dbReference type="Proteomes" id="UP000006381">
    <property type="component" value="Chromosome"/>
</dbReference>
<dbReference type="GO" id="GO:0005829">
    <property type="term" value="C:cytosol"/>
    <property type="evidence" value="ECO:0007669"/>
    <property type="project" value="TreeGrafter"/>
</dbReference>
<dbReference type="GO" id="GO:0005524">
    <property type="term" value="F:ATP binding"/>
    <property type="evidence" value="ECO:0007669"/>
    <property type="project" value="UniProtKB-UniRule"/>
</dbReference>
<dbReference type="GO" id="GO:0004385">
    <property type="term" value="F:guanylate kinase activity"/>
    <property type="evidence" value="ECO:0007669"/>
    <property type="project" value="UniProtKB-UniRule"/>
</dbReference>
<dbReference type="CDD" id="cd00071">
    <property type="entry name" value="GMPK"/>
    <property type="match status" value="1"/>
</dbReference>
<dbReference type="FunFam" id="3.40.50.300:FF:000855">
    <property type="entry name" value="Guanylate kinase"/>
    <property type="match status" value="1"/>
</dbReference>
<dbReference type="FunFam" id="3.30.63.10:FF:000002">
    <property type="entry name" value="Guanylate kinase 1"/>
    <property type="match status" value="1"/>
</dbReference>
<dbReference type="Gene3D" id="3.30.63.10">
    <property type="entry name" value="Guanylate Kinase phosphate binding domain"/>
    <property type="match status" value="1"/>
</dbReference>
<dbReference type="Gene3D" id="3.40.50.300">
    <property type="entry name" value="P-loop containing nucleotide triphosphate hydrolases"/>
    <property type="match status" value="2"/>
</dbReference>
<dbReference type="HAMAP" id="MF_00328">
    <property type="entry name" value="Guanylate_kinase"/>
    <property type="match status" value="1"/>
</dbReference>
<dbReference type="InterPro" id="IPR008145">
    <property type="entry name" value="GK/Ca_channel_bsu"/>
</dbReference>
<dbReference type="InterPro" id="IPR008144">
    <property type="entry name" value="Guanylate_kin-like_dom"/>
</dbReference>
<dbReference type="InterPro" id="IPR017665">
    <property type="entry name" value="Guanylate_kinase"/>
</dbReference>
<dbReference type="InterPro" id="IPR020590">
    <property type="entry name" value="Guanylate_kinase_CS"/>
</dbReference>
<dbReference type="InterPro" id="IPR027417">
    <property type="entry name" value="P-loop_NTPase"/>
</dbReference>
<dbReference type="NCBIfam" id="TIGR03263">
    <property type="entry name" value="guanyl_kin"/>
    <property type="match status" value="1"/>
</dbReference>
<dbReference type="PANTHER" id="PTHR23117:SF13">
    <property type="entry name" value="GUANYLATE KINASE"/>
    <property type="match status" value="1"/>
</dbReference>
<dbReference type="PANTHER" id="PTHR23117">
    <property type="entry name" value="GUANYLATE KINASE-RELATED"/>
    <property type="match status" value="1"/>
</dbReference>
<dbReference type="Pfam" id="PF00625">
    <property type="entry name" value="Guanylate_kin"/>
    <property type="match status" value="1"/>
</dbReference>
<dbReference type="SMART" id="SM00072">
    <property type="entry name" value="GuKc"/>
    <property type="match status" value="1"/>
</dbReference>
<dbReference type="SUPFAM" id="SSF52540">
    <property type="entry name" value="P-loop containing nucleoside triphosphate hydrolases"/>
    <property type="match status" value="1"/>
</dbReference>
<dbReference type="PROSITE" id="PS00856">
    <property type="entry name" value="GUANYLATE_KINASE_1"/>
    <property type="match status" value="1"/>
</dbReference>
<dbReference type="PROSITE" id="PS50052">
    <property type="entry name" value="GUANYLATE_KINASE_2"/>
    <property type="match status" value="1"/>
</dbReference>
<gene>
    <name evidence="1" type="primary">gmk</name>
    <name type="ordered locus">LBA1325</name>
</gene>
<comment type="function">
    <text evidence="1">Essential for recycling GMP and indirectly, cGMP.</text>
</comment>
<comment type="catalytic activity">
    <reaction evidence="1">
        <text>GMP + ATP = GDP + ADP</text>
        <dbReference type="Rhea" id="RHEA:20780"/>
        <dbReference type="ChEBI" id="CHEBI:30616"/>
        <dbReference type="ChEBI" id="CHEBI:58115"/>
        <dbReference type="ChEBI" id="CHEBI:58189"/>
        <dbReference type="ChEBI" id="CHEBI:456216"/>
        <dbReference type="EC" id="2.7.4.8"/>
    </reaction>
</comment>
<comment type="subcellular location">
    <subcellularLocation>
        <location evidence="1">Cytoplasm</location>
    </subcellularLocation>
</comment>
<comment type="similarity">
    <text evidence="1">Belongs to the guanylate kinase family.</text>
</comment>
<proteinExistence type="inferred from homology"/>
<name>KGUA_LACAC</name>
<evidence type="ECO:0000255" key="1">
    <source>
        <dbReference type="HAMAP-Rule" id="MF_00328"/>
    </source>
</evidence>
<reference key="1">
    <citation type="journal article" date="2005" name="Proc. Natl. Acad. Sci. U.S.A.">
        <title>Complete genome sequence of the probiotic lactic acid bacterium Lactobacillus acidophilus NCFM.</title>
        <authorList>
            <person name="Altermann E."/>
            <person name="Russell W.M."/>
            <person name="Azcarate-Peril M.A."/>
            <person name="Barrangou R."/>
            <person name="Buck B.L."/>
            <person name="McAuliffe O."/>
            <person name="Souther N."/>
            <person name="Dobson A."/>
            <person name="Duong T."/>
            <person name="Callanan M."/>
            <person name="Lick S."/>
            <person name="Hamrick A."/>
            <person name="Cano R."/>
            <person name="Klaenhammer T.R."/>
        </authorList>
    </citation>
    <scope>NUCLEOTIDE SEQUENCE [LARGE SCALE GENOMIC DNA]</scope>
    <source>
        <strain>ATCC 700396 / NCK56 / N2 / NCFM</strain>
    </source>
</reference>
<keyword id="KW-0067">ATP-binding</keyword>
<keyword id="KW-0963">Cytoplasm</keyword>
<keyword id="KW-0418">Kinase</keyword>
<keyword id="KW-0547">Nucleotide-binding</keyword>
<keyword id="KW-1185">Reference proteome</keyword>
<keyword id="KW-0808">Transferase</keyword>
<feature type="chain" id="PRO_0000266338" description="Guanylate kinase">
    <location>
        <begin position="1"/>
        <end position="204"/>
    </location>
</feature>
<feature type="domain" description="Guanylate kinase-like" evidence="1">
    <location>
        <begin position="5"/>
        <end position="184"/>
    </location>
</feature>
<feature type="binding site" evidence="1">
    <location>
        <begin position="12"/>
        <end position="19"/>
    </location>
    <ligand>
        <name>ATP</name>
        <dbReference type="ChEBI" id="CHEBI:30616"/>
    </ligand>
</feature>
<protein>
    <recommendedName>
        <fullName evidence="1">Guanylate kinase</fullName>
        <ecNumber evidence="1">2.7.4.8</ecNumber>
    </recommendedName>
    <alternativeName>
        <fullName evidence="1">GMP kinase</fullName>
    </alternativeName>
</protein>
<organism>
    <name type="scientific">Lactobacillus acidophilus (strain ATCC 700396 / NCK56 / N2 / NCFM)</name>
    <dbReference type="NCBI Taxonomy" id="272621"/>
    <lineage>
        <taxon>Bacteria</taxon>
        <taxon>Bacillati</taxon>
        <taxon>Bacillota</taxon>
        <taxon>Bacilli</taxon>
        <taxon>Lactobacillales</taxon>
        <taxon>Lactobacillaceae</taxon>
        <taxon>Lactobacillus</taxon>
    </lineage>
</organism>
<sequence length="204" mass="23008">MADKGLLLVLSGPSGVGKGTVKSAIVENKVFPFEYSVSMTTRKPRPGEVNGKDYYFVSEGRFKEAINNGELLEYNNYVGHYYGTPLGPVKEMLHEGKDVLLEIDVNGAQKVREKMPDGVFIFLTPPDLHTLHLRLEHRGTESEDVIRGRIKQARNEILEMEDYDYAVVNDTVANAVDHIKAIVDAEHVSVKRVIDDYRKMVEED</sequence>
<accession>Q5FJH2</accession>